<evidence type="ECO:0000255" key="1">
    <source>
        <dbReference type="HAMAP-Rule" id="MF_00362"/>
    </source>
</evidence>
<evidence type="ECO:0000305" key="2"/>
<keyword id="KW-0687">Ribonucleoprotein</keyword>
<keyword id="KW-0689">Ribosomal protein</keyword>
<keyword id="KW-0694">RNA-binding</keyword>
<keyword id="KW-0699">rRNA-binding</keyword>
<comment type="function">
    <text evidence="1">Forms part of the ribosomal stalk, playing a central role in the interaction of the ribosome with GTP-bound translation factors.</text>
</comment>
<comment type="subunit">
    <text evidence="1">Part of the ribosomal stalk of the 50S ribosomal subunit. The N-terminus interacts with L11 and the large rRNA to form the base of the stalk. The C-terminus forms an elongated spine to which L12 dimers bind in a sequential fashion forming a multimeric L10(L12)X complex.</text>
</comment>
<comment type="similarity">
    <text evidence="1">Belongs to the universal ribosomal protein uL10 family.</text>
</comment>
<protein>
    <recommendedName>
        <fullName evidence="1">Large ribosomal subunit protein uL10</fullName>
    </recommendedName>
    <alternativeName>
        <fullName evidence="2">50S ribosomal protein L10</fullName>
    </alternativeName>
</protein>
<dbReference type="EMBL" id="AM286415">
    <property type="protein sequence ID" value="CAL10416.1"/>
    <property type="molecule type" value="Genomic_DNA"/>
</dbReference>
<dbReference type="RefSeq" id="WP_005165800.1">
    <property type="nucleotide sequence ID" value="NC_008800.1"/>
</dbReference>
<dbReference type="RefSeq" id="YP_001004666.1">
    <property type="nucleotide sequence ID" value="NC_008800.1"/>
</dbReference>
<dbReference type="GeneID" id="31411433"/>
<dbReference type="KEGG" id="yen:YE0283"/>
<dbReference type="PATRIC" id="fig|393305.7.peg.376"/>
<dbReference type="eggNOG" id="COG0244">
    <property type="taxonomic scope" value="Bacteria"/>
</dbReference>
<dbReference type="HOGENOM" id="CLU_092227_0_2_6"/>
<dbReference type="OrthoDB" id="9808307at2"/>
<dbReference type="Proteomes" id="UP000000642">
    <property type="component" value="Chromosome"/>
</dbReference>
<dbReference type="GO" id="GO:0015934">
    <property type="term" value="C:large ribosomal subunit"/>
    <property type="evidence" value="ECO:0007669"/>
    <property type="project" value="InterPro"/>
</dbReference>
<dbReference type="GO" id="GO:0070180">
    <property type="term" value="F:large ribosomal subunit rRNA binding"/>
    <property type="evidence" value="ECO:0007669"/>
    <property type="project" value="UniProtKB-UniRule"/>
</dbReference>
<dbReference type="GO" id="GO:0003735">
    <property type="term" value="F:structural constituent of ribosome"/>
    <property type="evidence" value="ECO:0007669"/>
    <property type="project" value="InterPro"/>
</dbReference>
<dbReference type="GO" id="GO:0006412">
    <property type="term" value="P:translation"/>
    <property type="evidence" value="ECO:0007669"/>
    <property type="project" value="UniProtKB-UniRule"/>
</dbReference>
<dbReference type="CDD" id="cd05797">
    <property type="entry name" value="Ribosomal_L10"/>
    <property type="match status" value="1"/>
</dbReference>
<dbReference type="FunFam" id="3.30.70.1730:FF:000001">
    <property type="entry name" value="50S ribosomal protein L10"/>
    <property type="match status" value="1"/>
</dbReference>
<dbReference type="Gene3D" id="3.30.70.1730">
    <property type="match status" value="1"/>
</dbReference>
<dbReference type="Gene3D" id="6.10.250.2350">
    <property type="match status" value="1"/>
</dbReference>
<dbReference type="HAMAP" id="MF_00362">
    <property type="entry name" value="Ribosomal_uL10"/>
    <property type="match status" value="1"/>
</dbReference>
<dbReference type="InterPro" id="IPR001790">
    <property type="entry name" value="Ribosomal_uL10"/>
</dbReference>
<dbReference type="InterPro" id="IPR043141">
    <property type="entry name" value="Ribosomal_uL10-like_sf"/>
</dbReference>
<dbReference type="InterPro" id="IPR022973">
    <property type="entry name" value="Ribosomal_uL10_bac"/>
</dbReference>
<dbReference type="InterPro" id="IPR047865">
    <property type="entry name" value="Ribosomal_uL10_bac_type"/>
</dbReference>
<dbReference type="InterPro" id="IPR002363">
    <property type="entry name" value="Ribosomal_uL10_CS_bac"/>
</dbReference>
<dbReference type="NCBIfam" id="NF000955">
    <property type="entry name" value="PRK00099.1-1"/>
    <property type="match status" value="1"/>
</dbReference>
<dbReference type="PANTHER" id="PTHR11560">
    <property type="entry name" value="39S RIBOSOMAL PROTEIN L10, MITOCHONDRIAL"/>
    <property type="match status" value="1"/>
</dbReference>
<dbReference type="Pfam" id="PF00466">
    <property type="entry name" value="Ribosomal_L10"/>
    <property type="match status" value="1"/>
</dbReference>
<dbReference type="SUPFAM" id="SSF160369">
    <property type="entry name" value="Ribosomal protein L10-like"/>
    <property type="match status" value="1"/>
</dbReference>
<dbReference type="PROSITE" id="PS01109">
    <property type="entry name" value="RIBOSOMAL_L10"/>
    <property type="match status" value="1"/>
</dbReference>
<reference key="1">
    <citation type="journal article" date="2006" name="PLoS Genet.">
        <title>The complete genome sequence and comparative genome analysis of the high pathogenicity Yersinia enterocolitica strain 8081.</title>
        <authorList>
            <person name="Thomson N.R."/>
            <person name="Howard S."/>
            <person name="Wren B.W."/>
            <person name="Holden M.T.G."/>
            <person name="Crossman L."/>
            <person name="Challis G.L."/>
            <person name="Churcher C."/>
            <person name="Mungall K."/>
            <person name="Brooks K."/>
            <person name="Chillingworth T."/>
            <person name="Feltwell T."/>
            <person name="Abdellah Z."/>
            <person name="Hauser H."/>
            <person name="Jagels K."/>
            <person name="Maddison M."/>
            <person name="Moule S."/>
            <person name="Sanders M."/>
            <person name="Whitehead S."/>
            <person name="Quail M.A."/>
            <person name="Dougan G."/>
            <person name="Parkhill J."/>
            <person name="Prentice M.B."/>
        </authorList>
    </citation>
    <scope>NUCLEOTIDE SEQUENCE [LARGE SCALE GENOMIC DNA]</scope>
    <source>
        <strain>NCTC 13174 / 8081</strain>
    </source>
</reference>
<sequence>MALNLQGKQAIVAEVKEVAKGALSAVVADSRGVTVDKMTELRKAGREAGVHMQVVRNTLLSRAVEGTPFECLKDTFVGPTLIAFSSEHPGAAARLFKAFAKDNAKFEVKAAAFEGELIPAAQIDRLATLPTYEEAIARLMGTMKEAAAGKLVRTLAALRDQKEAEAA</sequence>
<accession>A1JIH8</accession>
<gene>
    <name evidence="1" type="primary">rplJ</name>
    <name type="ordered locus">YE0283</name>
</gene>
<proteinExistence type="inferred from homology"/>
<feature type="chain" id="PRO_1000005618" description="Large ribosomal subunit protein uL10">
    <location>
        <begin position="1"/>
        <end position="167"/>
    </location>
</feature>
<name>RL10_YERE8</name>
<organism>
    <name type="scientific">Yersinia enterocolitica serotype O:8 / biotype 1B (strain NCTC 13174 / 8081)</name>
    <dbReference type="NCBI Taxonomy" id="393305"/>
    <lineage>
        <taxon>Bacteria</taxon>
        <taxon>Pseudomonadati</taxon>
        <taxon>Pseudomonadota</taxon>
        <taxon>Gammaproteobacteria</taxon>
        <taxon>Enterobacterales</taxon>
        <taxon>Yersiniaceae</taxon>
        <taxon>Yersinia</taxon>
    </lineage>
</organism>